<feature type="chain" id="PRO_0000141682" description="Cobalt-precorrin-5B C(1)-methyltransferase">
    <location>
        <begin position="1"/>
        <end position="357"/>
    </location>
</feature>
<reference key="1">
    <citation type="submission" date="2002-09" db="EMBL/GenBank/DDBJ databases">
        <title>The carotenoid gene cluster of Rhodospirillum rubrum S1 contains genes for cobalamin biosynthesis.</title>
        <authorList>
            <person name="Roth E."/>
            <person name="Sommer H."/>
            <person name="Abou-Aisha K."/>
            <person name="Saegesser R."/>
            <person name="Ghosh R."/>
        </authorList>
    </citation>
    <scope>NUCLEOTIDE SEQUENCE [GENOMIC DNA]</scope>
</reference>
<reference key="2">
    <citation type="journal article" date="2011" name="Stand. Genomic Sci.">
        <title>Complete genome sequence of Rhodospirillum rubrum type strain (S1).</title>
        <authorList>
            <person name="Munk A.C."/>
            <person name="Copeland A."/>
            <person name="Lucas S."/>
            <person name="Lapidus A."/>
            <person name="Del Rio T.G."/>
            <person name="Barry K."/>
            <person name="Detter J.C."/>
            <person name="Hammon N."/>
            <person name="Israni S."/>
            <person name="Pitluck S."/>
            <person name="Brettin T."/>
            <person name="Bruce D."/>
            <person name="Han C."/>
            <person name="Tapia R."/>
            <person name="Gilna P."/>
            <person name="Schmutz J."/>
            <person name="Larimer F."/>
            <person name="Land M."/>
            <person name="Kyrpides N.C."/>
            <person name="Mavromatis K."/>
            <person name="Richardson P."/>
            <person name="Rohde M."/>
            <person name="Goeker M."/>
            <person name="Klenk H.P."/>
            <person name="Zhang Y."/>
            <person name="Roberts G.P."/>
            <person name="Reslewic S."/>
            <person name="Schwartz D.C."/>
        </authorList>
    </citation>
    <scope>NUCLEOTIDE SEQUENCE [LARGE SCALE GENOMIC DNA]</scope>
    <source>
        <strain>ATCC 11170 / ATH 1.1.1 / DSM 467 / LMG 4362 / NCIMB 8255 / S1</strain>
    </source>
</reference>
<comment type="function">
    <text evidence="1">Catalyzes the methylation of C-1 in cobalt-precorrin-5B to form cobalt-precorrin-6A.</text>
</comment>
<comment type="catalytic activity">
    <reaction evidence="1">
        <text>Co-precorrin-5B + S-adenosyl-L-methionine = Co-precorrin-6A + S-adenosyl-L-homocysteine</text>
        <dbReference type="Rhea" id="RHEA:26285"/>
        <dbReference type="ChEBI" id="CHEBI:57856"/>
        <dbReference type="ChEBI" id="CHEBI:59789"/>
        <dbReference type="ChEBI" id="CHEBI:60063"/>
        <dbReference type="ChEBI" id="CHEBI:60064"/>
        <dbReference type="EC" id="2.1.1.195"/>
    </reaction>
</comment>
<comment type="pathway">
    <text evidence="1">Cofactor biosynthesis; adenosylcobalamin biosynthesis; cob(II)yrinate a,c-diamide from sirohydrochlorin (anaerobic route): step 6/10.</text>
</comment>
<comment type="similarity">
    <text evidence="1">Belongs to the CbiD family.</text>
</comment>
<sequence>MDEADEGRSLRRGWTTGACATAALKAALEALVDRPFPDPVALTLPRGERPAFALATRETGPGWARAGVIKDAGDDPDVTHGALIEATARLLPKGSGLIFRAGSGVGTVTKPGLPLAVGEPAINPVPRAMMTEVATAAGLADLEISIAVAQGASIALRTWNPRLGILGGLSILGTTGVVVPYSCSAWIHSIRRGVDVARATGRAHVVGTTGATSERAALDHLGLDAEAVIDMGDFVGGLLKYLRDHPIPHLTIAGGFAKLSKLADGALDLHSKRAQVDIPALARRLAALGATQAVVSEAERANTALEVLTLAQAAGLPLATAIAFEAATVARAVLGEAPVRVSVLVVDRGGRVVGEGG</sequence>
<gene>
    <name evidence="1" type="primary">cbiD</name>
    <name type="ordered locus">Rru_A2996</name>
</gene>
<proteinExistence type="inferred from homology"/>
<keyword id="KW-0169">Cobalamin biosynthesis</keyword>
<keyword id="KW-0489">Methyltransferase</keyword>
<keyword id="KW-1185">Reference proteome</keyword>
<keyword id="KW-0949">S-adenosyl-L-methionine</keyword>
<keyword id="KW-0808">Transferase</keyword>
<name>CBID_RHORT</name>
<dbReference type="EC" id="2.1.1.195" evidence="1"/>
<dbReference type="EMBL" id="AY150801">
    <property type="protein sequence ID" value="AAN75025.1"/>
    <property type="molecule type" value="Genomic_DNA"/>
</dbReference>
<dbReference type="EMBL" id="CP000230">
    <property type="protein sequence ID" value="ABC23791.1"/>
    <property type="molecule type" value="Genomic_DNA"/>
</dbReference>
<dbReference type="RefSeq" id="WP_011390744.1">
    <property type="nucleotide sequence ID" value="NC_007643.1"/>
</dbReference>
<dbReference type="RefSeq" id="YP_428078.1">
    <property type="nucleotide sequence ID" value="NC_007643.1"/>
</dbReference>
<dbReference type="SMR" id="Q8GDE1"/>
<dbReference type="STRING" id="269796.Rru_A2996"/>
<dbReference type="EnsemblBacteria" id="ABC23791">
    <property type="protein sequence ID" value="ABC23791"/>
    <property type="gene ID" value="Rru_A2996"/>
</dbReference>
<dbReference type="KEGG" id="rru:Rru_A2996"/>
<dbReference type="PATRIC" id="fig|269796.9.peg.3104"/>
<dbReference type="eggNOG" id="COG1903">
    <property type="taxonomic scope" value="Bacteria"/>
</dbReference>
<dbReference type="HOGENOM" id="CLU_041273_0_0_5"/>
<dbReference type="PhylomeDB" id="Q8GDE1"/>
<dbReference type="UniPathway" id="UPA00148">
    <property type="reaction ID" value="UER00227"/>
</dbReference>
<dbReference type="Proteomes" id="UP000001929">
    <property type="component" value="Chromosome"/>
</dbReference>
<dbReference type="GO" id="GO:0043780">
    <property type="term" value="F:cobalt-precorrin-5B C1-methyltransferase activity"/>
    <property type="evidence" value="ECO:0007669"/>
    <property type="project" value="RHEA"/>
</dbReference>
<dbReference type="GO" id="GO:0019251">
    <property type="term" value="P:anaerobic cobalamin biosynthetic process"/>
    <property type="evidence" value="ECO:0007669"/>
    <property type="project" value="UniProtKB-UniRule"/>
</dbReference>
<dbReference type="GO" id="GO:0032259">
    <property type="term" value="P:methylation"/>
    <property type="evidence" value="ECO:0007669"/>
    <property type="project" value="UniProtKB-KW"/>
</dbReference>
<dbReference type="Gene3D" id="3.30.2110.10">
    <property type="entry name" value="CbiD-like"/>
    <property type="match status" value="1"/>
</dbReference>
<dbReference type="HAMAP" id="MF_00787">
    <property type="entry name" value="CbiD"/>
    <property type="match status" value="1"/>
</dbReference>
<dbReference type="InterPro" id="IPR002748">
    <property type="entry name" value="CbiD"/>
</dbReference>
<dbReference type="InterPro" id="IPR036074">
    <property type="entry name" value="CbiD_sf"/>
</dbReference>
<dbReference type="NCBIfam" id="TIGR00312">
    <property type="entry name" value="cbiD"/>
    <property type="match status" value="1"/>
</dbReference>
<dbReference type="NCBIfam" id="NF000849">
    <property type="entry name" value="PRK00075.1-1"/>
    <property type="match status" value="1"/>
</dbReference>
<dbReference type="PANTHER" id="PTHR35863">
    <property type="entry name" value="COBALT-PRECORRIN-5B C(1)-METHYLTRANSFERASE"/>
    <property type="match status" value="1"/>
</dbReference>
<dbReference type="PANTHER" id="PTHR35863:SF1">
    <property type="entry name" value="COBALT-PRECORRIN-5B C(1)-METHYLTRANSFERASE"/>
    <property type="match status" value="1"/>
</dbReference>
<dbReference type="Pfam" id="PF01888">
    <property type="entry name" value="CbiD"/>
    <property type="match status" value="1"/>
</dbReference>
<dbReference type="PIRSF" id="PIRSF026782">
    <property type="entry name" value="CbiD"/>
    <property type="match status" value="1"/>
</dbReference>
<dbReference type="SUPFAM" id="SSF111342">
    <property type="entry name" value="CbiD-like"/>
    <property type="match status" value="1"/>
</dbReference>
<protein>
    <recommendedName>
        <fullName evidence="1">Cobalt-precorrin-5B C(1)-methyltransferase</fullName>
        <ecNumber evidence="1">2.1.1.195</ecNumber>
    </recommendedName>
    <alternativeName>
        <fullName evidence="1">Cobalt-precorrin-6A synthase</fullName>
    </alternativeName>
</protein>
<evidence type="ECO:0000255" key="1">
    <source>
        <dbReference type="HAMAP-Rule" id="MF_00787"/>
    </source>
</evidence>
<accession>Q8GDE1</accession>
<accession>Q2RQ04</accession>
<organism>
    <name type="scientific">Rhodospirillum rubrum (strain ATCC 11170 / ATH 1.1.1 / DSM 467 / LMG 4362 / NCIMB 8255 / S1)</name>
    <dbReference type="NCBI Taxonomy" id="269796"/>
    <lineage>
        <taxon>Bacteria</taxon>
        <taxon>Pseudomonadati</taxon>
        <taxon>Pseudomonadota</taxon>
        <taxon>Alphaproteobacteria</taxon>
        <taxon>Rhodospirillales</taxon>
        <taxon>Rhodospirillaceae</taxon>
        <taxon>Rhodospirillum</taxon>
    </lineage>
</organism>